<evidence type="ECO:0000250" key="1"/>
<evidence type="ECO:0000255" key="2">
    <source>
        <dbReference type="HAMAP-Rule" id="MF_00100"/>
    </source>
</evidence>
<evidence type="ECO:0000256" key="3">
    <source>
        <dbReference type="SAM" id="MobiDB-lite"/>
    </source>
</evidence>
<sequence>MSKKRLHEIAKEIGKSSKEVVEHAKYLGLDVKSHASSVEEADAKKIISSFSKASKPDVTASQTVKPKEVAQPSVTVVKETGSEHVEKTQVSKPKSRNFKAEREARAKEQAARKQANGSSHRSQERRGGYRQPNNHQTNEQGDKRITHRSQGDTNDKRIERKASNVSPRHDNHQLVGDRNRSFAKENHKNGRFTNQKKQGRQEPQSKSPKIDFKARAAALKAEQNAEYSRQSETRFRAQQEAKRLAELARQEAKEAALKAQAEEMSHREAALKSIEEAETKLKSSNISAKSTADNRRKKQARPEKNRELTHHSQEGQKKNKKSWNSQNQVRNQKNSNWNKNKKTKKGKNVKNTNTAPKPVTERKFHELPKEFEYTEGMTVAEIAKRIKREPAEIVKKLFMMGVMATQNQSLDGDTIELLMVDYGIEAKAKVEVDDADIERFFEDENYLNPENIVERAPVVTIMGHVDHGKTTLLDTLRNSRVATGEAGGITQHIGAYQIEEAGKKITFLDTPGHAAFTSMRARGASVTDITILIVAADDGVMPQTIEAINHSKAAGVPIIVAINKIDKPGANPERVIAELAEYGIISTAWGGECEFVEISAKFNKNIDELLETVLLVAEVEELKADPTVRAIGTVIEARLDKGKGAIATLLVQQGTLHVQDPIVVGNTFGRVRAMVNDLGRRVKSAEPSTPVSITGLNETPMAGDHFAVYADEKAARAAGEERSKRALLKQRQNTQRVSLDNLFDTLKAGEIKTVNVIIKADVQGSVEALAASLVKIEVEGVRVNVVHSAVGAINESDVTLAEASNAVIIGFNVRPTPQARQQADTDDVEIRLHSIIYKVIEEVEEAMKGKLDPVYQEKILGEAIIRETFKVSKVGTIGGFMVINGKVTRDSSVRVIRDSVVIFDGKLASLKHYKDDVKEVGNAQEGGLMIENFNDLKVDDTIEAYIMEEIVRK</sequence>
<reference key="1">
    <citation type="journal article" date="2006" name="Proc. Natl. Acad. Sci. U.S.A.">
        <title>Molecular genetic anatomy of inter- and intraserotype variation in the human bacterial pathogen group A Streptococcus.</title>
        <authorList>
            <person name="Beres S.B."/>
            <person name="Richter E.W."/>
            <person name="Nagiec M.J."/>
            <person name="Sumby P."/>
            <person name="Porcella S.F."/>
            <person name="DeLeo F.R."/>
            <person name="Musser J.M."/>
        </authorList>
    </citation>
    <scope>NUCLEOTIDE SEQUENCE [LARGE SCALE GENOMIC DNA]</scope>
    <source>
        <strain>MGAS2096</strain>
    </source>
</reference>
<comment type="function">
    <text evidence="2">One of the essential components for the initiation of protein synthesis. Protects formylmethionyl-tRNA from spontaneous hydrolysis and promotes its binding to the 30S ribosomal subunits. Also involved in the hydrolysis of GTP during the formation of the 70S ribosomal complex.</text>
</comment>
<comment type="subcellular location">
    <subcellularLocation>
        <location evidence="2">Cytoplasm</location>
    </subcellularLocation>
</comment>
<comment type="similarity">
    <text evidence="2">Belongs to the TRAFAC class translation factor GTPase superfamily. Classic translation factor GTPase family. IF-2 subfamily.</text>
</comment>
<name>IF2_STRPB</name>
<gene>
    <name evidence="2" type="primary">infB</name>
    <name type="ordered locus">MGAS2096_Spy1435</name>
</gene>
<accession>Q1JAC1</accession>
<proteinExistence type="inferred from homology"/>
<feature type="chain" id="PRO_1000008349" description="Translation initiation factor IF-2">
    <location>
        <begin position="1"/>
        <end position="953"/>
    </location>
</feature>
<feature type="domain" description="tr-type G">
    <location>
        <begin position="454"/>
        <end position="623"/>
    </location>
</feature>
<feature type="region of interest" description="Disordered" evidence="3">
    <location>
        <begin position="48"/>
        <end position="240"/>
    </location>
</feature>
<feature type="region of interest" description="Disordered" evidence="3">
    <location>
        <begin position="279"/>
        <end position="363"/>
    </location>
</feature>
<feature type="region of interest" description="G1" evidence="1">
    <location>
        <begin position="463"/>
        <end position="470"/>
    </location>
</feature>
<feature type="region of interest" description="G2" evidence="1">
    <location>
        <begin position="488"/>
        <end position="492"/>
    </location>
</feature>
<feature type="region of interest" description="G3" evidence="1">
    <location>
        <begin position="509"/>
        <end position="512"/>
    </location>
</feature>
<feature type="region of interest" description="G4" evidence="1">
    <location>
        <begin position="563"/>
        <end position="566"/>
    </location>
</feature>
<feature type="region of interest" description="G5" evidence="1">
    <location>
        <begin position="599"/>
        <end position="601"/>
    </location>
</feature>
<feature type="compositionally biased region" description="Basic and acidic residues" evidence="3">
    <location>
        <begin position="80"/>
        <end position="89"/>
    </location>
</feature>
<feature type="compositionally biased region" description="Basic and acidic residues" evidence="3">
    <location>
        <begin position="98"/>
        <end position="111"/>
    </location>
</feature>
<feature type="compositionally biased region" description="Basic and acidic residues" evidence="3">
    <location>
        <begin position="140"/>
        <end position="188"/>
    </location>
</feature>
<feature type="compositionally biased region" description="Polar residues" evidence="3">
    <location>
        <begin position="191"/>
        <end position="207"/>
    </location>
</feature>
<feature type="compositionally biased region" description="Basic and acidic residues" evidence="3">
    <location>
        <begin position="229"/>
        <end position="240"/>
    </location>
</feature>
<feature type="compositionally biased region" description="Polar residues" evidence="3">
    <location>
        <begin position="282"/>
        <end position="291"/>
    </location>
</feature>
<feature type="compositionally biased region" description="Basic and acidic residues" evidence="3">
    <location>
        <begin position="300"/>
        <end position="317"/>
    </location>
</feature>
<feature type="compositionally biased region" description="Low complexity" evidence="3">
    <location>
        <begin position="322"/>
        <end position="338"/>
    </location>
</feature>
<feature type="compositionally biased region" description="Basic residues" evidence="3">
    <location>
        <begin position="339"/>
        <end position="348"/>
    </location>
</feature>
<feature type="binding site" evidence="2">
    <location>
        <begin position="463"/>
        <end position="470"/>
    </location>
    <ligand>
        <name>GTP</name>
        <dbReference type="ChEBI" id="CHEBI:37565"/>
    </ligand>
</feature>
<feature type="binding site" evidence="2">
    <location>
        <begin position="509"/>
        <end position="513"/>
    </location>
    <ligand>
        <name>GTP</name>
        <dbReference type="ChEBI" id="CHEBI:37565"/>
    </ligand>
</feature>
<feature type="binding site" evidence="2">
    <location>
        <begin position="563"/>
        <end position="566"/>
    </location>
    <ligand>
        <name>GTP</name>
        <dbReference type="ChEBI" id="CHEBI:37565"/>
    </ligand>
</feature>
<dbReference type="EMBL" id="CP000261">
    <property type="protein sequence ID" value="ABF36487.1"/>
    <property type="molecule type" value="Genomic_DNA"/>
</dbReference>
<dbReference type="SMR" id="Q1JAC1"/>
<dbReference type="KEGG" id="spj:MGAS2096_Spy1435"/>
<dbReference type="HOGENOM" id="CLU_006301_5_0_9"/>
<dbReference type="GO" id="GO:0005829">
    <property type="term" value="C:cytosol"/>
    <property type="evidence" value="ECO:0007669"/>
    <property type="project" value="TreeGrafter"/>
</dbReference>
<dbReference type="GO" id="GO:0005525">
    <property type="term" value="F:GTP binding"/>
    <property type="evidence" value="ECO:0007669"/>
    <property type="project" value="UniProtKB-KW"/>
</dbReference>
<dbReference type="GO" id="GO:0003924">
    <property type="term" value="F:GTPase activity"/>
    <property type="evidence" value="ECO:0007669"/>
    <property type="project" value="UniProtKB-UniRule"/>
</dbReference>
<dbReference type="GO" id="GO:0003743">
    <property type="term" value="F:translation initiation factor activity"/>
    <property type="evidence" value="ECO:0007669"/>
    <property type="project" value="UniProtKB-UniRule"/>
</dbReference>
<dbReference type="CDD" id="cd01887">
    <property type="entry name" value="IF2_eIF5B"/>
    <property type="match status" value="1"/>
</dbReference>
<dbReference type="CDD" id="cd03702">
    <property type="entry name" value="IF2_mtIF2_II"/>
    <property type="match status" value="1"/>
</dbReference>
<dbReference type="CDD" id="cd03692">
    <property type="entry name" value="mtIF2_IVc"/>
    <property type="match status" value="1"/>
</dbReference>
<dbReference type="FunFam" id="2.40.30.10:FF:000007">
    <property type="entry name" value="Translation initiation factor IF-2"/>
    <property type="match status" value="1"/>
</dbReference>
<dbReference type="FunFam" id="2.40.30.10:FF:000008">
    <property type="entry name" value="Translation initiation factor IF-2"/>
    <property type="match status" value="1"/>
</dbReference>
<dbReference type="FunFam" id="3.40.50.10050:FF:000001">
    <property type="entry name" value="Translation initiation factor IF-2"/>
    <property type="match status" value="1"/>
</dbReference>
<dbReference type="FunFam" id="3.40.50.300:FF:000019">
    <property type="entry name" value="Translation initiation factor IF-2"/>
    <property type="match status" value="1"/>
</dbReference>
<dbReference type="Gene3D" id="1.10.10.2480">
    <property type="match status" value="1"/>
</dbReference>
<dbReference type="Gene3D" id="3.40.50.300">
    <property type="entry name" value="P-loop containing nucleotide triphosphate hydrolases"/>
    <property type="match status" value="1"/>
</dbReference>
<dbReference type="Gene3D" id="2.40.30.10">
    <property type="entry name" value="Translation factors"/>
    <property type="match status" value="2"/>
</dbReference>
<dbReference type="Gene3D" id="3.40.50.10050">
    <property type="entry name" value="Translation initiation factor IF- 2, domain 3"/>
    <property type="match status" value="1"/>
</dbReference>
<dbReference type="HAMAP" id="MF_00100_B">
    <property type="entry name" value="IF_2_B"/>
    <property type="match status" value="1"/>
</dbReference>
<dbReference type="InterPro" id="IPR053905">
    <property type="entry name" value="EF-G-like_DII"/>
</dbReference>
<dbReference type="InterPro" id="IPR044145">
    <property type="entry name" value="IF2_II"/>
</dbReference>
<dbReference type="InterPro" id="IPR006847">
    <property type="entry name" value="IF2_N"/>
</dbReference>
<dbReference type="InterPro" id="IPR027417">
    <property type="entry name" value="P-loop_NTPase"/>
</dbReference>
<dbReference type="InterPro" id="IPR005225">
    <property type="entry name" value="Small_GTP-bd"/>
</dbReference>
<dbReference type="InterPro" id="IPR000795">
    <property type="entry name" value="T_Tr_GTP-bd_dom"/>
</dbReference>
<dbReference type="InterPro" id="IPR000178">
    <property type="entry name" value="TF_IF2_bacterial-like"/>
</dbReference>
<dbReference type="InterPro" id="IPR015760">
    <property type="entry name" value="TIF_IF2"/>
</dbReference>
<dbReference type="InterPro" id="IPR023115">
    <property type="entry name" value="TIF_IF2_dom3"/>
</dbReference>
<dbReference type="InterPro" id="IPR036925">
    <property type="entry name" value="TIF_IF2_dom3_sf"/>
</dbReference>
<dbReference type="InterPro" id="IPR009000">
    <property type="entry name" value="Transl_B-barrel_sf"/>
</dbReference>
<dbReference type="NCBIfam" id="TIGR00487">
    <property type="entry name" value="IF-2"/>
    <property type="match status" value="1"/>
</dbReference>
<dbReference type="NCBIfam" id="TIGR00231">
    <property type="entry name" value="small_GTP"/>
    <property type="match status" value="1"/>
</dbReference>
<dbReference type="PANTHER" id="PTHR43381:SF5">
    <property type="entry name" value="TR-TYPE G DOMAIN-CONTAINING PROTEIN"/>
    <property type="match status" value="1"/>
</dbReference>
<dbReference type="PANTHER" id="PTHR43381">
    <property type="entry name" value="TRANSLATION INITIATION FACTOR IF-2-RELATED"/>
    <property type="match status" value="1"/>
</dbReference>
<dbReference type="Pfam" id="PF22042">
    <property type="entry name" value="EF-G_D2"/>
    <property type="match status" value="1"/>
</dbReference>
<dbReference type="Pfam" id="PF00009">
    <property type="entry name" value="GTP_EFTU"/>
    <property type="match status" value="1"/>
</dbReference>
<dbReference type="Pfam" id="PF11987">
    <property type="entry name" value="IF-2"/>
    <property type="match status" value="1"/>
</dbReference>
<dbReference type="Pfam" id="PF04760">
    <property type="entry name" value="IF2_N"/>
    <property type="match status" value="2"/>
</dbReference>
<dbReference type="PRINTS" id="PR00449">
    <property type="entry name" value="RASTRNSFRMNG"/>
</dbReference>
<dbReference type="SUPFAM" id="SSF52156">
    <property type="entry name" value="Initiation factor IF2/eIF5b, domain 3"/>
    <property type="match status" value="1"/>
</dbReference>
<dbReference type="SUPFAM" id="SSF52540">
    <property type="entry name" value="P-loop containing nucleoside triphosphate hydrolases"/>
    <property type="match status" value="1"/>
</dbReference>
<dbReference type="SUPFAM" id="SSF50447">
    <property type="entry name" value="Translation proteins"/>
    <property type="match status" value="2"/>
</dbReference>
<dbReference type="PROSITE" id="PS51722">
    <property type="entry name" value="G_TR_2"/>
    <property type="match status" value="1"/>
</dbReference>
<dbReference type="PROSITE" id="PS01176">
    <property type="entry name" value="IF2"/>
    <property type="match status" value="1"/>
</dbReference>
<protein>
    <recommendedName>
        <fullName evidence="2">Translation initiation factor IF-2</fullName>
    </recommendedName>
</protein>
<keyword id="KW-0963">Cytoplasm</keyword>
<keyword id="KW-0342">GTP-binding</keyword>
<keyword id="KW-0396">Initiation factor</keyword>
<keyword id="KW-0547">Nucleotide-binding</keyword>
<keyword id="KW-0648">Protein biosynthesis</keyword>
<organism>
    <name type="scientific">Streptococcus pyogenes serotype M12 (strain MGAS2096)</name>
    <dbReference type="NCBI Taxonomy" id="370553"/>
    <lineage>
        <taxon>Bacteria</taxon>
        <taxon>Bacillati</taxon>
        <taxon>Bacillota</taxon>
        <taxon>Bacilli</taxon>
        <taxon>Lactobacillales</taxon>
        <taxon>Streptococcaceae</taxon>
        <taxon>Streptococcus</taxon>
    </lineage>
</organism>